<organism>
    <name type="scientific">Salmonella paratyphi C (strain RKS4594)</name>
    <dbReference type="NCBI Taxonomy" id="476213"/>
    <lineage>
        <taxon>Bacteria</taxon>
        <taxon>Pseudomonadati</taxon>
        <taxon>Pseudomonadota</taxon>
        <taxon>Gammaproteobacteria</taxon>
        <taxon>Enterobacterales</taxon>
        <taxon>Enterobacteriaceae</taxon>
        <taxon>Salmonella</taxon>
    </lineage>
</organism>
<reference key="1">
    <citation type="journal article" date="2009" name="PLoS ONE">
        <title>Salmonella paratyphi C: genetic divergence from Salmonella choleraesuis and pathogenic convergence with Salmonella typhi.</title>
        <authorList>
            <person name="Liu W.-Q."/>
            <person name="Feng Y."/>
            <person name="Wang Y."/>
            <person name="Zou Q.-H."/>
            <person name="Chen F."/>
            <person name="Guo J.-T."/>
            <person name="Peng Y.-H."/>
            <person name="Jin Y."/>
            <person name="Li Y.-G."/>
            <person name="Hu S.-N."/>
            <person name="Johnston R.N."/>
            <person name="Liu G.-R."/>
            <person name="Liu S.-L."/>
        </authorList>
    </citation>
    <scope>NUCLEOTIDE SEQUENCE [LARGE SCALE GENOMIC DNA]</scope>
    <source>
        <strain>RKS4594</strain>
    </source>
</reference>
<comment type="function">
    <text evidence="1">Forms an efflux pump with AaeB.</text>
</comment>
<comment type="subcellular location">
    <subcellularLocation>
        <location evidence="1">Cell inner membrane</location>
        <topology evidence="1">Single-pass membrane protein</topology>
    </subcellularLocation>
</comment>
<comment type="similarity">
    <text evidence="1">Belongs to the membrane fusion protein (MFP) (TC 8.A.1) family.</text>
</comment>
<sequence length="310" mass="34545">MKTLTRKLSRTAITLVLVILAFIAIFRAWVYYTESPWTRDARFSADVVAIAPDVAGLITHVNVHDNQLVKKDQVLFTIDQPRYQKALAEAEADVAYYQVLAQEKRQEAGRRNRLGVQAMSREEIDQANNVLQTVLHQLAKAQATRDLAKLDLERTVIRAPADGWVTNLNVYAGEFITRGSTAVALVKKNSFYVQAYMEETKLEGVRPGYRAEITPLGSNRVLKGTVDSVAAGVTNASSTSDAKGMATIDSNLEWVRLAQRVPVRIRLDEQQGNLWPAGTTATVVITGKQDRDASQDSFFRKLAHRLREFG</sequence>
<feature type="chain" id="PRO_1000185275" description="p-hydroxybenzoic acid efflux pump subunit AaeA">
    <location>
        <begin position="1"/>
        <end position="310"/>
    </location>
</feature>
<feature type="transmembrane region" description="Helical" evidence="1">
    <location>
        <begin position="12"/>
        <end position="32"/>
    </location>
</feature>
<proteinExistence type="inferred from homology"/>
<protein>
    <recommendedName>
        <fullName evidence="1">p-hydroxybenzoic acid efflux pump subunit AaeA</fullName>
        <shortName evidence="1">pHBA efflux pump protein A</shortName>
    </recommendedName>
</protein>
<evidence type="ECO:0000255" key="1">
    <source>
        <dbReference type="HAMAP-Rule" id="MF_01544"/>
    </source>
</evidence>
<gene>
    <name evidence="1" type="primary">aaeA</name>
    <name type="ordered locus">SPC_3435</name>
</gene>
<keyword id="KW-0997">Cell inner membrane</keyword>
<keyword id="KW-1003">Cell membrane</keyword>
<keyword id="KW-0472">Membrane</keyword>
<keyword id="KW-0812">Transmembrane</keyword>
<keyword id="KW-1133">Transmembrane helix</keyword>
<keyword id="KW-0813">Transport</keyword>
<dbReference type="EMBL" id="CP000857">
    <property type="protein sequence ID" value="ACN47520.1"/>
    <property type="molecule type" value="Genomic_DNA"/>
</dbReference>
<dbReference type="RefSeq" id="WP_000855134.1">
    <property type="nucleotide sequence ID" value="NC_012125.1"/>
</dbReference>
<dbReference type="SMR" id="C0PZR0"/>
<dbReference type="KEGG" id="sei:SPC_3435"/>
<dbReference type="HOGENOM" id="CLU_018816_15_2_6"/>
<dbReference type="Proteomes" id="UP000001599">
    <property type="component" value="Chromosome"/>
</dbReference>
<dbReference type="GO" id="GO:0005886">
    <property type="term" value="C:plasma membrane"/>
    <property type="evidence" value="ECO:0007669"/>
    <property type="project" value="UniProtKB-SubCell"/>
</dbReference>
<dbReference type="GO" id="GO:0022857">
    <property type="term" value="F:transmembrane transporter activity"/>
    <property type="evidence" value="ECO:0007669"/>
    <property type="project" value="UniProtKB-UniRule"/>
</dbReference>
<dbReference type="FunFam" id="2.40.30.170:FF:000002">
    <property type="entry name" value="p-hydroxybenzoic acid efflux pump subunit AaeA"/>
    <property type="match status" value="1"/>
</dbReference>
<dbReference type="FunFam" id="2.40.50.100:FF:000018">
    <property type="entry name" value="p-hydroxybenzoic acid efflux pump subunit AaeA"/>
    <property type="match status" value="1"/>
</dbReference>
<dbReference type="Gene3D" id="2.40.30.170">
    <property type="match status" value="1"/>
</dbReference>
<dbReference type="Gene3D" id="2.40.50.100">
    <property type="match status" value="1"/>
</dbReference>
<dbReference type="HAMAP" id="MF_01544">
    <property type="entry name" value="AaeA"/>
    <property type="match status" value="1"/>
</dbReference>
<dbReference type="InterPro" id="IPR043602">
    <property type="entry name" value="CusB-like_dom_1"/>
</dbReference>
<dbReference type="InterPro" id="IPR032317">
    <property type="entry name" value="CusB_D23"/>
</dbReference>
<dbReference type="InterPro" id="IPR050393">
    <property type="entry name" value="MFP_Efflux_Pump"/>
</dbReference>
<dbReference type="InterPro" id="IPR022871">
    <property type="entry name" value="PHBA_efflux_pump_AaeA"/>
</dbReference>
<dbReference type="InterPro" id="IPR006143">
    <property type="entry name" value="RND_pump_MFP"/>
</dbReference>
<dbReference type="NCBIfam" id="NF007850">
    <property type="entry name" value="PRK10559.1"/>
    <property type="match status" value="1"/>
</dbReference>
<dbReference type="NCBIfam" id="TIGR01730">
    <property type="entry name" value="RND_mfp"/>
    <property type="match status" value="1"/>
</dbReference>
<dbReference type="PANTHER" id="PTHR30367:SF12">
    <property type="entry name" value="P-HYDROXYBENZOIC ACID EFFLUX PUMP SUBUNIT AAEA"/>
    <property type="match status" value="1"/>
</dbReference>
<dbReference type="PANTHER" id="PTHR30367">
    <property type="entry name" value="P-HYDROXYBENZOIC ACID EFFLUX PUMP SUBUNIT AAEA-RELATED"/>
    <property type="match status" value="1"/>
</dbReference>
<dbReference type="Pfam" id="PF00529">
    <property type="entry name" value="CusB_dom_1"/>
    <property type="match status" value="1"/>
</dbReference>
<dbReference type="Pfam" id="PF16576">
    <property type="entry name" value="HlyD_D23"/>
    <property type="match status" value="1"/>
</dbReference>
<dbReference type="SUPFAM" id="SSF111369">
    <property type="entry name" value="HlyD-like secretion proteins"/>
    <property type="match status" value="1"/>
</dbReference>
<accession>C0PZR0</accession>
<name>AAEA_SALPC</name>